<evidence type="ECO:0000255" key="1">
    <source>
        <dbReference type="HAMAP-Rule" id="MF_00203"/>
    </source>
</evidence>
<keyword id="KW-0963">Cytoplasm</keyword>
<keyword id="KW-0227">DNA damage</keyword>
<keyword id="KW-0228">DNA excision</keyword>
<keyword id="KW-0234">DNA repair</keyword>
<keyword id="KW-0267">Excision nuclease</keyword>
<keyword id="KW-0742">SOS response</keyword>
<accession>B0R7R3</accession>
<sequence>MNGDEVRARASELPAEPGVYQFVARDPDGTADGERVLYVGKAVDIRDRVRSYGDPRSERIAGMVARADDVTVAVTDTETQALLLEANLVKRHQPRYNVRLKDDKSYPLVQVTSHREAPRIEVTRDPDPGAAAFGPYTDKGDVETVVKAVRSVYGLRGCSEHKYRDRERPCLDYEMGLCAAPCTGAISEREYREAVESATRFFEGETGALADPLRREMAAAAQAEAFERAANLRDRLAVVEGFHEGGGAAVAAGDADAGASTDVLGVAVEGDAATVARLHAEGGQLVERDQHRLEAPQGEDRVAAVLAAFLVQYYAERDLPERILLPEPHGDDEVAAWLDAADVAVGVPGAGREARLVELALKNAHRRAGGGDELGALADALGVRRPERIEGVDVSHAQGREVVGSNVCFVDGSAETADYRRKKLDEENDDYANMRRLVGWRAERAVDGRDDRPDPDVLLVDGGRGQLDAALDAVEAAGWDGPDAVIALAKDEEVVVTPDRTYDWGSDAPQLHVLQRVRDEAHRFAVAYHRTLRDDVTTALDGITGVGPELRARLLGRFGSVAGVRQASVKDLRDVAGVGEATAETIAKRL</sequence>
<organism>
    <name type="scientific">Halobacterium salinarum (strain ATCC 29341 / DSM 671 / R1)</name>
    <dbReference type="NCBI Taxonomy" id="478009"/>
    <lineage>
        <taxon>Archaea</taxon>
        <taxon>Methanobacteriati</taxon>
        <taxon>Methanobacteriota</taxon>
        <taxon>Stenosarchaea group</taxon>
        <taxon>Halobacteria</taxon>
        <taxon>Halobacteriales</taxon>
        <taxon>Halobacteriaceae</taxon>
        <taxon>Halobacterium</taxon>
        <taxon>Halobacterium salinarum NRC-34001</taxon>
    </lineage>
</organism>
<protein>
    <recommendedName>
        <fullName evidence="1">UvrABC system protein C</fullName>
        <shortName evidence="1">Protein UvrC</shortName>
    </recommendedName>
    <alternativeName>
        <fullName evidence="1">Excinuclease ABC subunit C</fullName>
    </alternativeName>
</protein>
<dbReference type="EMBL" id="AM774415">
    <property type="protein sequence ID" value="CAP14782.1"/>
    <property type="molecule type" value="Genomic_DNA"/>
</dbReference>
<dbReference type="RefSeq" id="WP_010903778.1">
    <property type="nucleotide sequence ID" value="NC_010364.1"/>
</dbReference>
<dbReference type="SMR" id="B0R7R3"/>
<dbReference type="EnsemblBacteria" id="CAP14782">
    <property type="protein sequence ID" value="CAP14782"/>
    <property type="gene ID" value="OE_4344F"/>
</dbReference>
<dbReference type="KEGG" id="hsl:OE_4344F"/>
<dbReference type="HOGENOM" id="CLU_014841_3_1_2"/>
<dbReference type="PhylomeDB" id="B0R7R3"/>
<dbReference type="Proteomes" id="UP000001321">
    <property type="component" value="Chromosome"/>
</dbReference>
<dbReference type="GO" id="GO:0005737">
    <property type="term" value="C:cytoplasm"/>
    <property type="evidence" value="ECO:0007669"/>
    <property type="project" value="UniProtKB-SubCell"/>
</dbReference>
<dbReference type="GO" id="GO:0009380">
    <property type="term" value="C:excinuclease repair complex"/>
    <property type="evidence" value="ECO:0007669"/>
    <property type="project" value="InterPro"/>
</dbReference>
<dbReference type="GO" id="GO:0003677">
    <property type="term" value="F:DNA binding"/>
    <property type="evidence" value="ECO:0007669"/>
    <property type="project" value="UniProtKB-UniRule"/>
</dbReference>
<dbReference type="GO" id="GO:0009381">
    <property type="term" value="F:excinuclease ABC activity"/>
    <property type="evidence" value="ECO:0007669"/>
    <property type="project" value="UniProtKB-UniRule"/>
</dbReference>
<dbReference type="GO" id="GO:0006289">
    <property type="term" value="P:nucleotide-excision repair"/>
    <property type="evidence" value="ECO:0007669"/>
    <property type="project" value="UniProtKB-UniRule"/>
</dbReference>
<dbReference type="GO" id="GO:0009432">
    <property type="term" value="P:SOS response"/>
    <property type="evidence" value="ECO:0007669"/>
    <property type="project" value="UniProtKB-UniRule"/>
</dbReference>
<dbReference type="CDD" id="cd10434">
    <property type="entry name" value="GIY-YIG_UvrC_Cho"/>
    <property type="match status" value="1"/>
</dbReference>
<dbReference type="FunFam" id="3.30.420.340:FF:000004">
    <property type="entry name" value="UvrABC system protein C"/>
    <property type="match status" value="1"/>
</dbReference>
<dbReference type="Gene3D" id="1.10.150.20">
    <property type="entry name" value="5' to 3' exonuclease, C-terminal subdomain"/>
    <property type="match status" value="1"/>
</dbReference>
<dbReference type="Gene3D" id="3.40.1440.10">
    <property type="entry name" value="GIY-YIG endonuclease"/>
    <property type="match status" value="1"/>
</dbReference>
<dbReference type="Gene3D" id="3.30.420.340">
    <property type="entry name" value="UvrC, RNAse H endonuclease domain"/>
    <property type="match status" value="1"/>
</dbReference>
<dbReference type="HAMAP" id="MF_00203">
    <property type="entry name" value="UvrC"/>
    <property type="match status" value="1"/>
</dbReference>
<dbReference type="InterPro" id="IPR000305">
    <property type="entry name" value="GIY-YIG_endonuc"/>
</dbReference>
<dbReference type="InterPro" id="IPR035901">
    <property type="entry name" value="GIY-YIG_endonuc_sf"/>
</dbReference>
<dbReference type="InterPro" id="IPR047296">
    <property type="entry name" value="GIY-YIG_UvrC_Cho"/>
</dbReference>
<dbReference type="InterPro" id="IPR003583">
    <property type="entry name" value="Hlx-hairpin-Hlx_DNA-bd_motif"/>
</dbReference>
<dbReference type="InterPro" id="IPR010994">
    <property type="entry name" value="RuvA_2-like"/>
</dbReference>
<dbReference type="InterPro" id="IPR001943">
    <property type="entry name" value="UVR_dom"/>
</dbReference>
<dbReference type="InterPro" id="IPR036876">
    <property type="entry name" value="UVR_dom_sf"/>
</dbReference>
<dbReference type="InterPro" id="IPR050066">
    <property type="entry name" value="UvrABC_protein_C"/>
</dbReference>
<dbReference type="InterPro" id="IPR004791">
    <property type="entry name" value="UvrC"/>
</dbReference>
<dbReference type="InterPro" id="IPR001162">
    <property type="entry name" value="UvrC_RNase_H_dom"/>
</dbReference>
<dbReference type="InterPro" id="IPR038476">
    <property type="entry name" value="UvrC_RNase_H_dom_sf"/>
</dbReference>
<dbReference type="NCBIfam" id="NF011262">
    <property type="entry name" value="PRK14668.1"/>
    <property type="match status" value="1"/>
</dbReference>
<dbReference type="NCBIfam" id="TIGR00194">
    <property type="entry name" value="uvrC"/>
    <property type="match status" value="1"/>
</dbReference>
<dbReference type="PANTHER" id="PTHR30562:SF1">
    <property type="entry name" value="UVRABC SYSTEM PROTEIN C"/>
    <property type="match status" value="1"/>
</dbReference>
<dbReference type="PANTHER" id="PTHR30562">
    <property type="entry name" value="UVRC/OXIDOREDUCTASE"/>
    <property type="match status" value="1"/>
</dbReference>
<dbReference type="Pfam" id="PF14520">
    <property type="entry name" value="HHH_5"/>
    <property type="match status" value="1"/>
</dbReference>
<dbReference type="Pfam" id="PF02151">
    <property type="entry name" value="UVR"/>
    <property type="match status" value="1"/>
</dbReference>
<dbReference type="Pfam" id="PF22920">
    <property type="entry name" value="UvrC_RNaseH"/>
    <property type="match status" value="1"/>
</dbReference>
<dbReference type="Pfam" id="PF08459">
    <property type="entry name" value="UvrC_RNaseH_dom"/>
    <property type="match status" value="1"/>
</dbReference>
<dbReference type="SMART" id="SM00465">
    <property type="entry name" value="GIYc"/>
    <property type="match status" value="1"/>
</dbReference>
<dbReference type="SMART" id="SM00278">
    <property type="entry name" value="HhH1"/>
    <property type="match status" value="2"/>
</dbReference>
<dbReference type="SUPFAM" id="SSF46600">
    <property type="entry name" value="C-terminal UvrC-binding domain of UvrB"/>
    <property type="match status" value="1"/>
</dbReference>
<dbReference type="SUPFAM" id="SSF82771">
    <property type="entry name" value="GIY-YIG endonuclease"/>
    <property type="match status" value="1"/>
</dbReference>
<dbReference type="SUPFAM" id="SSF47781">
    <property type="entry name" value="RuvA domain 2-like"/>
    <property type="match status" value="1"/>
</dbReference>
<dbReference type="PROSITE" id="PS50164">
    <property type="entry name" value="GIY_YIG"/>
    <property type="match status" value="1"/>
</dbReference>
<dbReference type="PROSITE" id="PS50151">
    <property type="entry name" value="UVR"/>
    <property type="match status" value="1"/>
</dbReference>
<dbReference type="PROSITE" id="PS50165">
    <property type="entry name" value="UVRC"/>
    <property type="match status" value="1"/>
</dbReference>
<reference key="1">
    <citation type="journal article" date="2008" name="Genomics">
        <title>Evolution in the laboratory: the genome of Halobacterium salinarum strain R1 compared to that of strain NRC-1.</title>
        <authorList>
            <person name="Pfeiffer F."/>
            <person name="Schuster S.C."/>
            <person name="Broicher A."/>
            <person name="Falb M."/>
            <person name="Palm P."/>
            <person name="Rodewald K."/>
            <person name="Ruepp A."/>
            <person name="Soppa J."/>
            <person name="Tittor J."/>
            <person name="Oesterhelt D."/>
        </authorList>
    </citation>
    <scope>NUCLEOTIDE SEQUENCE [LARGE SCALE GENOMIC DNA]</scope>
    <source>
        <strain>ATCC 29341 / DSM 671 / R1</strain>
    </source>
</reference>
<proteinExistence type="inferred from homology"/>
<feature type="chain" id="PRO_1000099487" description="UvrABC system protein C">
    <location>
        <begin position="1"/>
        <end position="590"/>
    </location>
</feature>
<feature type="domain" description="GIY-YIG" evidence="1">
    <location>
        <begin position="15"/>
        <end position="98"/>
    </location>
</feature>
<feature type="domain" description="UVR" evidence="1">
    <location>
        <begin position="207"/>
        <end position="242"/>
    </location>
</feature>
<name>UVRC_HALS3</name>
<comment type="function">
    <text evidence="1">The UvrABC repair system catalyzes the recognition and processing of DNA lesions. UvrC both incises the 5' and 3' sides of the lesion. The N-terminal half is responsible for the 3' incision and the C-terminal half is responsible for the 5' incision.</text>
</comment>
<comment type="subunit">
    <text evidence="1">Interacts with UvrB in an incision complex.</text>
</comment>
<comment type="subcellular location">
    <subcellularLocation>
        <location evidence="1">Cytoplasm</location>
    </subcellularLocation>
</comment>
<comment type="similarity">
    <text evidence="1">Belongs to the UvrC family.</text>
</comment>
<gene>
    <name evidence="1" type="primary">uvrC</name>
    <name type="ordered locus">OE_4344F</name>
</gene>